<sequence>MAKKSMIAKQKRTPKFKVQEYTRCERCGRPHSVYRKFKLCRICFRELAYKGQIPGVKKASW</sequence>
<proteinExistence type="inferred from homology"/>
<feature type="chain" id="PRO_1000143884" description="Small ribosomal subunit protein uS14">
    <location>
        <begin position="1"/>
        <end position="61"/>
    </location>
</feature>
<feature type="binding site" evidence="1">
    <location>
        <position position="24"/>
    </location>
    <ligand>
        <name>Zn(2+)</name>
        <dbReference type="ChEBI" id="CHEBI:29105"/>
    </ligand>
</feature>
<feature type="binding site" evidence="1">
    <location>
        <position position="27"/>
    </location>
    <ligand>
        <name>Zn(2+)</name>
        <dbReference type="ChEBI" id="CHEBI:29105"/>
    </ligand>
</feature>
<feature type="binding site" evidence="1">
    <location>
        <position position="40"/>
    </location>
    <ligand>
        <name>Zn(2+)</name>
        <dbReference type="ChEBI" id="CHEBI:29105"/>
    </ligand>
</feature>
<feature type="binding site" evidence="1">
    <location>
        <position position="43"/>
    </location>
    <ligand>
        <name>Zn(2+)</name>
        <dbReference type="ChEBI" id="CHEBI:29105"/>
    </ligand>
</feature>
<reference key="1">
    <citation type="journal article" date="2008" name="Chem. Biol. Interact.">
        <title>Extending the Bacillus cereus group genomics to putative food-borne pathogens of different toxicity.</title>
        <authorList>
            <person name="Lapidus A."/>
            <person name="Goltsman E."/>
            <person name="Auger S."/>
            <person name="Galleron N."/>
            <person name="Segurens B."/>
            <person name="Dossat C."/>
            <person name="Land M.L."/>
            <person name="Broussolle V."/>
            <person name="Brillard J."/>
            <person name="Guinebretiere M.-H."/>
            <person name="Sanchis V."/>
            <person name="Nguen-the C."/>
            <person name="Lereclus D."/>
            <person name="Richardson P."/>
            <person name="Wincker P."/>
            <person name="Weissenbach J."/>
            <person name="Ehrlich S.D."/>
            <person name="Sorokin A."/>
        </authorList>
    </citation>
    <scope>NUCLEOTIDE SEQUENCE [LARGE SCALE GENOMIC DNA]</scope>
    <source>
        <strain>KBAB4</strain>
    </source>
</reference>
<gene>
    <name evidence="1" type="primary">rpsZ</name>
    <name evidence="1" type="synonym">rpsN</name>
    <name type="ordered locus">BcerKBAB4_0118</name>
</gene>
<protein>
    <recommendedName>
        <fullName evidence="1">Small ribosomal subunit protein uS14</fullName>
    </recommendedName>
    <alternativeName>
        <fullName evidence="2">30S ribosomal protein S14 type Z</fullName>
    </alternativeName>
</protein>
<dbReference type="EMBL" id="CP000903">
    <property type="protein sequence ID" value="ABY41387.1"/>
    <property type="molecule type" value="Genomic_DNA"/>
</dbReference>
<dbReference type="RefSeq" id="WP_001085700.1">
    <property type="nucleotide sequence ID" value="NZ_CAKMRX030000129.1"/>
</dbReference>
<dbReference type="SMR" id="A9VP90"/>
<dbReference type="GeneID" id="93010930"/>
<dbReference type="KEGG" id="bwe:BcerKBAB4_0118"/>
<dbReference type="eggNOG" id="COG0199">
    <property type="taxonomic scope" value="Bacteria"/>
</dbReference>
<dbReference type="HOGENOM" id="CLU_139869_3_0_9"/>
<dbReference type="Proteomes" id="UP000002154">
    <property type="component" value="Chromosome"/>
</dbReference>
<dbReference type="GO" id="GO:0015935">
    <property type="term" value="C:small ribosomal subunit"/>
    <property type="evidence" value="ECO:0007669"/>
    <property type="project" value="TreeGrafter"/>
</dbReference>
<dbReference type="GO" id="GO:0019843">
    <property type="term" value="F:rRNA binding"/>
    <property type="evidence" value="ECO:0007669"/>
    <property type="project" value="UniProtKB-UniRule"/>
</dbReference>
<dbReference type="GO" id="GO:0003735">
    <property type="term" value="F:structural constituent of ribosome"/>
    <property type="evidence" value="ECO:0007669"/>
    <property type="project" value="InterPro"/>
</dbReference>
<dbReference type="GO" id="GO:0008270">
    <property type="term" value="F:zinc ion binding"/>
    <property type="evidence" value="ECO:0007669"/>
    <property type="project" value="UniProtKB-UniRule"/>
</dbReference>
<dbReference type="GO" id="GO:0006412">
    <property type="term" value="P:translation"/>
    <property type="evidence" value="ECO:0007669"/>
    <property type="project" value="UniProtKB-UniRule"/>
</dbReference>
<dbReference type="FunFam" id="4.10.830.10:FF:000001">
    <property type="entry name" value="30S ribosomal protein S14 type Z"/>
    <property type="match status" value="1"/>
</dbReference>
<dbReference type="Gene3D" id="4.10.830.10">
    <property type="entry name" value="30s Ribosomal Protein S14, Chain N"/>
    <property type="match status" value="1"/>
</dbReference>
<dbReference type="HAMAP" id="MF_01364_B">
    <property type="entry name" value="Ribosomal_uS14_2_B"/>
    <property type="match status" value="1"/>
</dbReference>
<dbReference type="InterPro" id="IPR001209">
    <property type="entry name" value="Ribosomal_uS14"/>
</dbReference>
<dbReference type="InterPro" id="IPR023053">
    <property type="entry name" value="Ribosomal_uS14_bact"/>
</dbReference>
<dbReference type="InterPro" id="IPR018271">
    <property type="entry name" value="Ribosomal_uS14_CS"/>
</dbReference>
<dbReference type="InterPro" id="IPR043140">
    <property type="entry name" value="Ribosomal_uS14_sf"/>
</dbReference>
<dbReference type="NCBIfam" id="NF005974">
    <property type="entry name" value="PRK08061.1"/>
    <property type="match status" value="1"/>
</dbReference>
<dbReference type="PANTHER" id="PTHR19836">
    <property type="entry name" value="30S RIBOSOMAL PROTEIN S14"/>
    <property type="match status" value="1"/>
</dbReference>
<dbReference type="PANTHER" id="PTHR19836:SF26">
    <property type="entry name" value="SMALL RIBOSOMAL SUBUNIT PROTEIN US14B"/>
    <property type="match status" value="1"/>
</dbReference>
<dbReference type="Pfam" id="PF00253">
    <property type="entry name" value="Ribosomal_S14"/>
    <property type="match status" value="1"/>
</dbReference>
<dbReference type="SUPFAM" id="SSF57716">
    <property type="entry name" value="Glucocorticoid receptor-like (DNA-binding domain)"/>
    <property type="match status" value="1"/>
</dbReference>
<dbReference type="PROSITE" id="PS00527">
    <property type="entry name" value="RIBOSOMAL_S14"/>
    <property type="match status" value="1"/>
</dbReference>
<organism>
    <name type="scientific">Bacillus mycoides (strain KBAB4)</name>
    <name type="common">Bacillus weihenstephanensis</name>
    <dbReference type="NCBI Taxonomy" id="315730"/>
    <lineage>
        <taxon>Bacteria</taxon>
        <taxon>Bacillati</taxon>
        <taxon>Bacillota</taxon>
        <taxon>Bacilli</taxon>
        <taxon>Bacillales</taxon>
        <taxon>Bacillaceae</taxon>
        <taxon>Bacillus</taxon>
        <taxon>Bacillus cereus group</taxon>
    </lineage>
</organism>
<evidence type="ECO:0000255" key="1">
    <source>
        <dbReference type="HAMAP-Rule" id="MF_01364"/>
    </source>
</evidence>
<evidence type="ECO:0000305" key="2"/>
<comment type="function">
    <text evidence="1">Binds 16S rRNA, required for the assembly of 30S particles and may also be responsible for determining the conformation of the 16S rRNA at the A site.</text>
</comment>
<comment type="cofactor">
    <cofactor evidence="1">
        <name>Zn(2+)</name>
        <dbReference type="ChEBI" id="CHEBI:29105"/>
    </cofactor>
    <text evidence="1">Binds 1 zinc ion per subunit.</text>
</comment>
<comment type="subunit">
    <text evidence="1">Part of the 30S ribosomal subunit. Contacts proteins S3 and S10.</text>
</comment>
<comment type="similarity">
    <text evidence="1">Belongs to the universal ribosomal protein uS14 family. Zinc-binding uS14 subfamily.</text>
</comment>
<accession>A9VP90</accession>
<keyword id="KW-0479">Metal-binding</keyword>
<keyword id="KW-0687">Ribonucleoprotein</keyword>
<keyword id="KW-0689">Ribosomal protein</keyword>
<keyword id="KW-0694">RNA-binding</keyword>
<keyword id="KW-0699">rRNA-binding</keyword>
<keyword id="KW-0862">Zinc</keyword>
<name>RS14Z_BACMK</name>